<feature type="chain" id="PRO_1000138193" description="Regulator of sigma D">
    <location>
        <begin position="1"/>
        <end position="158"/>
    </location>
</feature>
<name>RSD_ECOLU</name>
<organism>
    <name type="scientific">Escherichia coli O17:K52:H18 (strain UMN026 / ExPEC)</name>
    <dbReference type="NCBI Taxonomy" id="585056"/>
    <lineage>
        <taxon>Bacteria</taxon>
        <taxon>Pseudomonadati</taxon>
        <taxon>Pseudomonadota</taxon>
        <taxon>Gammaproteobacteria</taxon>
        <taxon>Enterobacterales</taxon>
        <taxon>Enterobacteriaceae</taxon>
        <taxon>Escherichia</taxon>
    </lineage>
</organism>
<keyword id="KW-0963">Cytoplasm</keyword>
<keyword id="KW-0804">Transcription</keyword>
<keyword id="KW-0805">Transcription regulation</keyword>
<accession>B7NFT6</accession>
<evidence type="ECO:0000255" key="1">
    <source>
        <dbReference type="HAMAP-Rule" id="MF_01181"/>
    </source>
</evidence>
<comment type="function">
    <text evidence="1">Binds RpoD and negatively regulates RpoD-mediated transcription activation by preventing the interaction between the primary sigma factor RpoD with the catalytic core of the RNA polymerase and with promoter DNA. May be involved in replacement of the RNA polymerase sigma subunit from RpoD to RpoS during the transition from exponential growth to the stationary phase.</text>
</comment>
<comment type="subunit">
    <text evidence="1">Interacts with RpoD.</text>
</comment>
<comment type="subcellular location">
    <subcellularLocation>
        <location evidence="1">Cytoplasm</location>
    </subcellularLocation>
</comment>
<comment type="similarity">
    <text evidence="1">Belongs to the Rsd/AlgQ family.</text>
</comment>
<reference key="1">
    <citation type="journal article" date="2009" name="PLoS Genet.">
        <title>Organised genome dynamics in the Escherichia coli species results in highly diverse adaptive paths.</title>
        <authorList>
            <person name="Touchon M."/>
            <person name="Hoede C."/>
            <person name="Tenaillon O."/>
            <person name="Barbe V."/>
            <person name="Baeriswyl S."/>
            <person name="Bidet P."/>
            <person name="Bingen E."/>
            <person name="Bonacorsi S."/>
            <person name="Bouchier C."/>
            <person name="Bouvet O."/>
            <person name="Calteau A."/>
            <person name="Chiapello H."/>
            <person name="Clermont O."/>
            <person name="Cruveiller S."/>
            <person name="Danchin A."/>
            <person name="Diard M."/>
            <person name="Dossat C."/>
            <person name="Karoui M.E."/>
            <person name="Frapy E."/>
            <person name="Garry L."/>
            <person name="Ghigo J.M."/>
            <person name="Gilles A.M."/>
            <person name="Johnson J."/>
            <person name="Le Bouguenec C."/>
            <person name="Lescat M."/>
            <person name="Mangenot S."/>
            <person name="Martinez-Jehanne V."/>
            <person name="Matic I."/>
            <person name="Nassif X."/>
            <person name="Oztas S."/>
            <person name="Petit M.A."/>
            <person name="Pichon C."/>
            <person name="Rouy Z."/>
            <person name="Ruf C.S."/>
            <person name="Schneider D."/>
            <person name="Tourret J."/>
            <person name="Vacherie B."/>
            <person name="Vallenet D."/>
            <person name="Medigue C."/>
            <person name="Rocha E.P.C."/>
            <person name="Denamur E."/>
        </authorList>
    </citation>
    <scope>NUCLEOTIDE SEQUENCE [LARGE SCALE GENOMIC DNA]</scope>
    <source>
        <strain>UMN026 / ExPEC</strain>
    </source>
</reference>
<proteinExistence type="inferred from homology"/>
<gene>
    <name evidence="1" type="primary">rsd</name>
    <name type="ordered locus">ECUMN_4519</name>
</gene>
<dbReference type="EMBL" id="CU928163">
    <property type="protein sequence ID" value="CAR15643.1"/>
    <property type="molecule type" value="Genomic_DNA"/>
</dbReference>
<dbReference type="RefSeq" id="WP_000934302.1">
    <property type="nucleotide sequence ID" value="NC_011751.1"/>
</dbReference>
<dbReference type="RefSeq" id="YP_002415133.1">
    <property type="nucleotide sequence ID" value="NC_011751.1"/>
</dbReference>
<dbReference type="SMR" id="B7NFT6"/>
<dbReference type="STRING" id="585056.ECUMN_4519"/>
<dbReference type="GeneID" id="75205513"/>
<dbReference type="KEGG" id="eum:ECUMN_4519"/>
<dbReference type="PATRIC" id="fig|585056.7.peg.4689"/>
<dbReference type="HOGENOM" id="CLU_142729_0_0_6"/>
<dbReference type="Proteomes" id="UP000007097">
    <property type="component" value="Chromosome"/>
</dbReference>
<dbReference type="GO" id="GO:0005737">
    <property type="term" value="C:cytoplasm"/>
    <property type="evidence" value="ECO:0007669"/>
    <property type="project" value="UniProtKB-SubCell"/>
</dbReference>
<dbReference type="GO" id="GO:0006355">
    <property type="term" value="P:regulation of DNA-templated transcription"/>
    <property type="evidence" value="ECO:0007669"/>
    <property type="project" value="InterPro"/>
</dbReference>
<dbReference type="FunFam" id="1.20.120.1370:FF:000001">
    <property type="entry name" value="Regulator of sigma D"/>
    <property type="match status" value="1"/>
</dbReference>
<dbReference type="Gene3D" id="1.20.120.1370">
    <property type="entry name" value="Regulator of RNA polymerase sigma(70) subunit, domain 4"/>
    <property type="match status" value="1"/>
</dbReference>
<dbReference type="HAMAP" id="MF_01181">
    <property type="entry name" value="Rsd"/>
    <property type="match status" value="1"/>
</dbReference>
<dbReference type="InterPro" id="IPR038309">
    <property type="entry name" value="Rsd/AlgQ_sf"/>
</dbReference>
<dbReference type="InterPro" id="IPR023785">
    <property type="entry name" value="Sigma70_reg_Rsd"/>
</dbReference>
<dbReference type="InterPro" id="IPR007448">
    <property type="entry name" value="Sigma70_reg_Rsd_AlgQ"/>
</dbReference>
<dbReference type="NCBIfam" id="NF008723">
    <property type="entry name" value="PRK11718.1"/>
    <property type="match status" value="1"/>
</dbReference>
<dbReference type="Pfam" id="PF04353">
    <property type="entry name" value="Rsd_AlgQ"/>
    <property type="match status" value="1"/>
</dbReference>
<dbReference type="PIRSF" id="PIRSF016548">
    <property type="entry name" value="Rsd_AlgQ"/>
    <property type="match status" value="1"/>
</dbReference>
<sequence length="158" mass="18243">MLNQLDNLTERVRGSNKLVDRWLHVRKHLLVAYYNLVGIKPGKESYMRLNEKALDDFCQSLVDYLSAGHFSIYERILHKLEGNGQLARAAKIWPQLEANTQQIMDYYDSSLETAIDHDNYLEFQQVLSDIGEALEARFVLEDKLILLVLDAARVKHPA</sequence>
<protein>
    <recommendedName>
        <fullName evidence="1">Regulator of sigma D</fullName>
    </recommendedName>
</protein>